<protein>
    <recommendedName>
        <fullName evidence="1">3-hydroxyacyl-[acyl-carrier-protein] dehydratase FabZ</fullName>
        <ecNumber evidence="1">4.2.1.59</ecNumber>
    </recommendedName>
    <alternativeName>
        <fullName evidence="1">(3R)-hydroxymyristoyl-[acyl-carrier-protein] dehydratase</fullName>
        <shortName evidence="1">(3R)-hydroxymyristoyl-ACP dehydrase</shortName>
    </alternativeName>
    <alternativeName>
        <fullName evidence="1">Beta-hydroxyacyl-ACP dehydratase</fullName>
    </alternativeName>
</protein>
<comment type="function">
    <text evidence="1">Involved in unsaturated fatty acids biosynthesis. Catalyzes the dehydration of short chain beta-hydroxyacyl-ACPs and long chain saturated and unsaturated beta-hydroxyacyl-ACPs.</text>
</comment>
<comment type="catalytic activity">
    <reaction evidence="1">
        <text>a (3R)-hydroxyacyl-[ACP] = a (2E)-enoyl-[ACP] + H2O</text>
        <dbReference type="Rhea" id="RHEA:13097"/>
        <dbReference type="Rhea" id="RHEA-COMP:9925"/>
        <dbReference type="Rhea" id="RHEA-COMP:9945"/>
        <dbReference type="ChEBI" id="CHEBI:15377"/>
        <dbReference type="ChEBI" id="CHEBI:78784"/>
        <dbReference type="ChEBI" id="CHEBI:78827"/>
        <dbReference type="EC" id="4.2.1.59"/>
    </reaction>
</comment>
<comment type="subcellular location">
    <subcellularLocation>
        <location evidence="1">Cytoplasm</location>
    </subcellularLocation>
</comment>
<comment type="similarity">
    <text evidence="1">Belongs to the thioester dehydratase family. FabZ subfamily.</text>
</comment>
<keyword id="KW-0963">Cytoplasm</keyword>
<keyword id="KW-0441">Lipid A biosynthesis</keyword>
<keyword id="KW-0444">Lipid biosynthesis</keyword>
<keyword id="KW-0443">Lipid metabolism</keyword>
<keyword id="KW-0456">Lyase</keyword>
<proteinExistence type="inferred from homology"/>
<accession>A4WUH0</accession>
<organism>
    <name type="scientific">Cereibacter sphaeroides (strain ATCC 17025 / ATH 2.4.3)</name>
    <name type="common">Rhodobacter sphaeroides</name>
    <dbReference type="NCBI Taxonomy" id="349102"/>
    <lineage>
        <taxon>Bacteria</taxon>
        <taxon>Pseudomonadati</taxon>
        <taxon>Pseudomonadota</taxon>
        <taxon>Alphaproteobacteria</taxon>
        <taxon>Rhodobacterales</taxon>
        <taxon>Paracoccaceae</taxon>
        <taxon>Cereibacter</taxon>
    </lineage>
</organism>
<name>FABZ_CERS5</name>
<feature type="chain" id="PRO_1000049855" description="3-hydroxyacyl-[acyl-carrier-protein] dehydratase FabZ">
    <location>
        <begin position="1"/>
        <end position="155"/>
    </location>
</feature>
<feature type="active site" evidence="1">
    <location>
        <position position="57"/>
    </location>
</feature>
<gene>
    <name evidence="1" type="primary">fabZ</name>
    <name type="ordered locus">Rsph17025_2144</name>
</gene>
<evidence type="ECO:0000255" key="1">
    <source>
        <dbReference type="HAMAP-Rule" id="MF_00406"/>
    </source>
</evidence>
<sequence length="155" mass="16711">MTEAAEATLSADIQLIQRIIPHRYPFLLVDRVRDIVPNQSAVGIKCVTMNEPQFTGHFPGLPIFPGVQIIEAMAQTAAVLVGVSLDLADKGAKVYFMGIDGAKFRRKVVPGDVLEMTVTVKRGGGKVWKFEGRASVDGELAAEAEFAAMLDIPKG</sequence>
<reference key="1">
    <citation type="submission" date="2007-04" db="EMBL/GenBank/DDBJ databases">
        <title>Complete sequence of chromosome of Rhodobacter sphaeroides ATCC 17025.</title>
        <authorList>
            <consortium name="US DOE Joint Genome Institute"/>
            <person name="Copeland A."/>
            <person name="Lucas S."/>
            <person name="Lapidus A."/>
            <person name="Barry K."/>
            <person name="Detter J.C."/>
            <person name="Glavina del Rio T."/>
            <person name="Hammon N."/>
            <person name="Israni S."/>
            <person name="Dalin E."/>
            <person name="Tice H."/>
            <person name="Pitluck S."/>
            <person name="Chertkov O."/>
            <person name="Brettin T."/>
            <person name="Bruce D."/>
            <person name="Han C."/>
            <person name="Schmutz J."/>
            <person name="Larimer F."/>
            <person name="Land M."/>
            <person name="Hauser L."/>
            <person name="Kyrpides N."/>
            <person name="Kim E."/>
            <person name="Richardson P."/>
            <person name="Mackenzie C."/>
            <person name="Choudhary M."/>
            <person name="Donohue T.J."/>
            <person name="Kaplan S."/>
        </authorList>
    </citation>
    <scope>NUCLEOTIDE SEQUENCE [LARGE SCALE GENOMIC DNA]</scope>
    <source>
        <strain>ATCC 17025 / ATH 2.4.3</strain>
    </source>
</reference>
<dbReference type="EC" id="4.2.1.59" evidence="1"/>
<dbReference type="EMBL" id="CP000661">
    <property type="protein sequence ID" value="ABP71034.1"/>
    <property type="molecule type" value="Genomic_DNA"/>
</dbReference>
<dbReference type="SMR" id="A4WUH0"/>
<dbReference type="STRING" id="349102.Rsph17025_2144"/>
<dbReference type="KEGG" id="rsq:Rsph17025_2144"/>
<dbReference type="eggNOG" id="COG0764">
    <property type="taxonomic scope" value="Bacteria"/>
</dbReference>
<dbReference type="HOGENOM" id="CLU_078912_1_0_5"/>
<dbReference type="BioCyc" id="RSPH349102:G1G8M-2213-MONOMER"/>
<dbReference type="GO" id="GO:0005737">
    <property type="term" value="C:cytoplasm"/>
    <property type="evidence" value="ECO:0007669"/>
    <property type="project" value="UniProtKB-SubCell"/>
</dbReference>
<dbReference type="GO" id="GO:0016020">
    <property type="term" value="C:membrane"/>
    <property type="evidence" value="ECO:0007669"/>
    <property type="project" value="GOC"/>
</dbReference>
<dbReference type="GO" id="GO:0019171">
    <property type="term" value="F:(3R)-hydroxyacyl-[acyl-carrier-protein] dehydratase activity"/>
    <property type="evidence" value="ECO:0007669"/>
    <property type="project" value="UniProtKB-EC"/>
</dbReference>
<dbReference type="GO" id="GO:0006633">
    <property type="term" value="P:fatty acid biosynthetic process"/>
    <property type="evidence" value="ECO:0007669"/>
    <property type="project" value="UniProtKB-UniRule"/>
</dbReference>
<dbReference type="GO" id="GO:0009245">
    <property type="term" value="P:lipid A biosynthetic process"/>
    <property type="evidence" value="ECO:0007669"/>
    <property type="project" value="UniProtKB-UniRule"/>
</dbReference>
<dbReference type="CDD" id="cd01288">
    <property type="entry name" value="FabZ"/>
    <property type="match status" value="1"/>
</dbReference>
<dbReference type="FunFam" id="3.10.129.10:FF:000001">
    <property type="entry name" value="3-hydroxyacyl-[acyl-carrier-protein] dehydratase FabZ"/>
    <property type="match status" value="1"/>
</dbReference>
<dbReference type="Gene3D" id="3.10.129.10">
    <property type="entry name" value="Hotdog Thioesterase"/>
    <property type="match status" value="1"/>
</dbReference>
<dbReference type="HAMAP" id="MF_00406">
    <property type="entry name" value="FabZ"/>
    <property type="match status" value="1"/>
</dbReference>
<dbReference type="InterPro" id="IPR013114">
    <property type="entry name" value="FabA_FabZ"/>
</dbReference>
<dbReference type="InterPro" id="IPR010084">
    <property type="entry name" value="FabZ"/>
</dbReference>
<dbReference type="InterPro" id="IPR029069">
    <property type="entry name" value="HotDog_dom_sf"/>
</dbReference>
<dbReference type="NCBIfam" id="TIGR01750">
    <property type="entry name" value="fabZ"/>
    <property type="match status" value="1"/>
</dbReference>
<dbReference type="NCBIfam" id="NF000582">
    <property type="entry name" value="PRK00006.1"/>
    <property type="match status" value="1"/>
</dbReference>
<dbReference type="PANTHER" id="PTHR30272">
    <property type="entry name" value="3-HYDROXYACYL-[ACYL-CARRIER-PROTEIN] DEHYDRATASE"/>
    <property type="match status" value="1"/>
</dbReference>
<dbReference type="PANTHER" id="PTHR30272:SF1">
    <property type="entry name" value="3-HYDROXYACYL-[ACYL-CARRIER-PROTEIN] DEHYDRATASE"/>
    <property type="match status" value="1"/>
</dbReference>
<dbReference type="Pfam" id="PF07977">
    <property type="entry name" value="FabA"/>
    <property type="match status" value="1"/>
</dbReference>
<dbReference type="SUPFAM" id="SSF54637">
    <property type="entry name" value="Thioesterase/thiol ester dehydrase-isomerase"/>
    <property type="match status" value="1"/>
</dbReference>